<accession>Q0TMD6</accession>
<feature type="chain" id="PRO_0000257275" description="Ribosomal RNA small subunit methyltransferase A">
    <location>
        <begin position="1"/>
        <end position="285"/>
    </location>
</feature>
<feature type="binding site" evidence="1">
    <location>
        <position position="29"/>
    </location>
    <ligand>
        <name>S-adenosyl-L-methionine</name>
        <dbReference type="ChEBI" id="CHEBI:59789"/>
    </ligand>
</feature>
<feature type="binding site" evidence="1">
    <location>
        <position position="31"/>
    </location>
    <ligand>
        <name>S-adenosyl-L-methionine</name>
        <dbReference type="ChEBI" id="CHEBI:59789"/>
    </ligand>
</feature>
<feature type="binding site" evidence="1">
    <location>
        <position position="56"/>
    </location>
    <ligand>
        <name>S-adenosyl-L-methionine</name>
        <dbReference type="ChEBI" id="CHEBI:59789"/>
    </ligand>
</feature>
<feature type="binding site" evidence="1">
    <location>
        <position position="77"/>
    </location>
    <ligand>
        <name>S-adenosyl-L-methionine</name>
        <dbReference type="ChEBI" id="CHEBI:59789"/>
    </ligand>
</feature>
<feature type="binding site" evidence="1">
    <location>
        <position position="102"/>
    </location>
    <ligand>
        <name>S-adenosyl-L-methionine</name>
        <dbReference type="ChEBI" id="CHEBI:59789"/>
    </ligand>
</feature>
<feature type="binding site" evidence="1">
    <location>
        <position position="123"/>
    </location>
    <ligand>
        <name>S-adenosyl-L-methionine</name>
        <dbReference type="ChEBI" id="CHEBI:59789"/>
    </ligand>
</feature>
<gene>
    <name evidence="1" type="primary">rsmA</name>
    <name evidence="1" type="synonym">ksgA</name>
    <name type="ordered locus">CPF_2840</name>
</gene>
<reference key="1">
    <citation type="journal article" date="2006" name="Genome Res.">
        <title>Skewed genomic variability in strains of the toxigenic bacterial pathogen, Clostridium perfringens.</title>
        <authorList>
            <person name="Myers G.S.A."/>
            <person name="Rasko D.A."/>
            <person name="Cheung J.K."/>
            <person name="Ravel J."/>
            <person name="Seshadri R."/>
            <person name="DeBoy R.T."/>
            <person name="Ren Q."/>
            <person name="Varga J."/>
            <person name="Awad M.M."/>
            <person name="Brinkac L.M."/>
            <person name="Daugherty S.C."/>
            <person name="Haft D.H."/>
            <person name="Dodson R.J."/>
            <person name="Madupu R."/>
            <person name="Nelson W.C."/>
            <person name="Rosovitz M.J."/>
            <person name="Sullivan S.A."/>
            <person name="Khouri H."/>
            <person name="Dimitrov G.I."/>
            <person name="Watkins K.L."/>
            <person name="Mulligan S."/>
            <person name="Benton J."/>
            <person name="Radune D."/>
            <person name="Fisher D.J."/>
            <person name="Atkins H.S."/>
            <person name="Hiscox T."/>
            <person name="Jost B.H."/>
            <person name="Billington S.J."/>
            <person name="Songer J.G."/>
            <person name="McClane B.A."/>
            <person name="Titball R.W."/>
            <person name="Rood J.I."/>
            <person name="Melville S.B."/>
            <person name="Paulsen I.T."/>
        </authorList>
    </citation>
    <scope>NUCLEOTIDE SEQUENCE [LARGE SCALE GENOMIC DNA]</scope>
    <source>
        <strain>ATCC 13124 / DSM 756 / JCM 1290 / NCIMB 6125 / NCTC 8237 / S 107 / Type A</strain>
    </source>
</reference>
<organism>
    <name type="scientific">Clostridium perfringens (strain ATCC 13124 / DSM 756 / JCM 1290 / NCIMB 6125 / NCTC 8237 / Type A)</name>
    <dbReference type="NCBI Taxonomy" id="195103"/>
    <lineage>
        <taxon>Bacteria</taxon>
        <taxon>Bacillati</taxon>
        <taxon>Bacillota</taxon>
        <taxon>Clostridia</taxon>
        <taxon>Eubacteriales</taxon>
        <taxon>Clostridiaceae</taxon>
        <taxon>Clostridium</taxon>
    </lineage>
</organism>
<sequence length="285" mass="32363">MDINEIKDIKTKELVQKYNFRFSKSLGQNFLIDDSVPRDIVNGADVCEDDLVIEIGPGVGTLTVQLLKRAKRVVAIELDSSLIPILTAELGDNPKFQLIHNDALKVDFNEIIGDEKSVKLVANLPYYVTTPIIVNLLKGGYNFKSLTIMIQKEVAERMNAEPNCKDYGALSILVQYYCNTKIVRKVPPSCFIPRPKVDSIVIRLERLEEPSVKVKNEKLFFEIVRHAFNMRRKTLWNATKNVKLPKELMEKAYEEAGIDPKRRGETLSLAEFGALSDAIDKYMNN</sequence>
<dbReference type="EC" id="2.1.1.182" evidence="1"/>
<dbReference type="EMBL" id="CP000246">
    <property type="protein sequence ID" value="ABG82659.1"/>
    <property type="molecule type" value="Genomic_DNA"/>
</dbReference>
<dbReference type="RefSeq" id="WP_003450598.1">
    <property type="nucleotide sequence ID" value="NC_008261.1"/>
</dbReference>
<dbReference type="SMR" id="Q0TMD6"/>
<dbReference type="STRING" id="195103.CPF_2840"/>
<dbReference type="PaxDb" id="195103-CPF_2840"/>
<dbReference type="GeneID" id="93000879"/>
<dbReference type="KEGG" id="cpf:CPF_2840"/>
<dbReference type="eggNOG" id="COG0030">
    <property type="taxonomic scope" value="Bacteria"/>
</dbReference>
<dbReference type="HOGENOM" id="CLU_041220_0_0_9"/>
<dbReference type="Proteomes" id="UP000001823">
    <property type="component" value="Chromosome"/>
</dbReference>
<dbReference type="GO" id="GO:0005829">
    <property type="term" value="C:cytosol"/>
    <property type="evidence" value="ECO:0007669"/>
    <property type="project" value="TreeGrafter"/>
</dbReference>
<dbReference type="GO" id="GO:0052908">
    <property type="term" value="F:16S rRNA (adenine(1518)-N(6)/adenine(1519)-N(6))-dimethyltransferase activity"/>
    <property type="evidence" value="ECO:0007669"/>
    <property type="project" value="UniProtKB-EC"/>
</dbReference>
<dbReference type="GO" id="GO:0003723">
    <property type="term" value="F:RNA binding"/>
    <property type="evidence" value="ECO:0007669"/>
    <property type="project" value="UniProtKB-KW"/>
</dbReference>
<dbReference type="CDD" id="cd02440">
    <property type="entry name" value="AdoMet_MTases"/>
    <property type="match status" value="1"/>
</dbReference>
<dbReference type="FunFam" id="3.40.50.150:FF:000023">
    <property type="entry name" value="Ribosomal RNA small subunit methyltransferase A"/>
    <property type="match status" value="1"/>
</dbReference>
<dbReference type="Gene3D" id="1.10.8.100">
    <property type="entry name" value="Ribosomal RNA adenine dimethylase-like, domain 2"/>
    <property type="match status" value="1"/>
</dbReference>
<dbReference type="Gene3D" id="3.40.50.150">
    <property type="entry name" value="Vaccinia Virus protein VP39"/>
    <property type="match status" value="1"/>
</dbReference>
<dbReference type="HAMAP" id="MF_00607">
    <property type="entry name" value="16SrRNA_methyltr_A"/>
    <property type="match status" value="1"/>
</dbReference>
<dbReference type="InterPro" id="IPR001737">
    <property type="entry name" value="KsgA/Erm"/>
</dbReference>
<dbReference type="InterPro" id="IPR023165">
    <property type="entry name" value="rRNA_Ade_diMease-like_C"/>
</dbReference>
<dbReference type="InterPro" id="IPR020596">
    <property type="entry name" value="rRNA_Ade_Mease_Trfase_CS"/>
</dbReference>
<dbReference type="InterPro" id="IPR020598">
    <property type="entry name" value="rRNA_Ade_methylase_Trfase_N"/>
</dbReference>
<dbReference type="InterPro" id="IPR011530">
    <property type="entry name" value="rRNA_adenine_dimethylase"/>
</dbReference>
<dbReference type="InterPro" id="IPR029063">
    <property type="entry name" value="SAM-dependent_MTases_sf"/>
</dbReference>
<dbReference type="NCBIfam" id="TIGR00755">
    <property type="entry name" value="ksgA"/>
    <property type="match status" value="1"/>
</dbReference>
<dbReference type="PANTHER" id="PTHR11727">
    <property type="entry name" value="DIMETHYLADENOSINE TRANSFERASE"/>
    <property type="match status" value="1"/>
</dbReference>
<dbReference type="PANTHER" id="PTHR11727:SF7">
    <property type="entry name" value="DIMETHYLADENOSINE TRANSFERASE-RELATED"/>
    <property type="match status" value="1"/>
</dbReference>
<dbReference type="Pfam" id="PF00398">
    <property type="entry name" value="RrnaAD"/>
    <property type="match status" value="1"/>
</dbReference>
<dbReference type="SMART" id="SM00650">
    <property type="entry name" value="rADc"/>
    <property type="match status" value="1"/>
</dbReference>
<dbReference type="SUPFAM" id="SSF53335">
    <property type="entry name" value="S-adenosyl-L-methionine-dependent methyltransferases"/>
    <property type="match status" value="1"/>
</dbReference>
<dbReference type="PROSITE" id="PS01131">
    <property type="entry name" value="RRNA_A_DIMETH"/>
    <property type="match status" value="1"/>
</dbReference>
<dbReference type="PROSITE" id="PS51689">
    <property type="entry name" value="SAM_RNA_A_N6_MT"/>
    <property type="match status" value="1"/>
</dbReference>
<keyword id="KW-0963">Cytoplasm</keyword>
<keyword id="KW-0489">Methyltransferase</keyword>
<keyword id="KW-0694">RNA-binding</keyword>
<keyword id="KW-0698">rRNA processing</keyword>
<keyword id="KW-0949">S-adenosyl-L-methionine</keyword>
<keyword id="KW-0808">Transferase</keyword>
<protein>
    <recommendedName>
        <fullName evidence="1">Ribosomal RNA small subunit methyltransferase A</fullName>
        <ecNumber evidence="1">2.1.1.182</ecNumber>
    </recommendedName>
    <alternativeName>
        <fullName evidence="1">16S rRNA (adenine(1518)-N(6)/adenine(1519)-N(6))-dimethyltransferase</fullName>
    </alternativeName>
    <alternativeName>
        <fullName evidence="1">16S rRNA dimethyladenosine transferase</fullName>
    </alternativeName>
    <alternativeName>
        <fullName evidence="1">16S rRNA dimethylase</fullName>
    </alternativeName>
    <alternativeName>
        <fullName evidence="1">S-adenosylmethionine-6-N', N'-adenosyl(rRNA) dimethyltransferase</fullName>
    </alternativeName>
</protein>
<comment type="function">
    <text evidence="1">Specifically dimethylates two adjacent adenosines (A1518 and A1519) in the loop of a conserved hairpin near the 3'-end of 16S rRNA in the 30S particle. May play a critical role in biogenesis of 30S subunits.</text>
</comment>
<comment type="catalytic activity">
    <reaction evidence="1">
        <text>adenosine(1518)/adenosine(1519) in 16S rRNA + 4 S-adenosyl-L-methionine = N(6)-dimethyladenosine(1518)/N(6)-dimethyladenosine(1519) in 16S rRNA + 4 S-adenosyl-L-homocysteine + 4 H(+)</text>
        <dbReference type="Rhea" id="RHEA:19609"/>
        <dbReference type="Rhea" id="RHEA-COMP:10232"/>
        <dbReference type="Rhea" id="RHEA-COMP:10233"/>
        <dbReference type="ChEBI" id="CHEBI:15378"/>
        <dbReference type="ChEBI" id="CHEBI:57856"/>
        <dbReference type="ChEBI" id="CHEBI:59789"/>
        <dbReference type="ChEBI" id="CHEBI:74411"/>
        <dbReference type="ChEBI" id="CHEBI:74493"/>
        <dbReference type="EC" id="2.1.1.182"/>
    </reaction>
</comment>
<comment type="subcellular location">
    <subcellularLocation>
        <location evidence="1">Cytoplasm</location>
    </subcellularLocation>
</comment>
<comment type="similarity">
    <text evidence="1">Belongs to the class I-like SAM-binding methyltransferase superfamily. rRNA adenine N(6)-methyltransferase family. RsmA subfamily.</text>
</comment>
<proteinExistence type="inferred from homology"/>
<evidence type="ECO:0000255" key="1">
    <source>
        <dbReference type="HAMAP-Rule" id="MF_00607"/>
    </source>
</evidence>
<name>RSMA_CLOP1</name>